<sequence>MKKIILVAGGTGGHFFPAVALGEELIKRGYEVHFITDLRCKQYIKQDMKVIFHILDLKRSGNIFLFLPRLSIAVLKAIKLLYNMKSAVTVGFGGYPVIAPMFAAIFLRVPIIIHEQNSYLGKVNKFFASFAKKIAISYEKIKNLPEFAKSKIVVTGGVVRENIRELKVIEMSSRGLTTGSKKSLIKALDSVVKPRNDKLFTIFIFGGSQGAKLFSELISASIQIVMQKQPSLELNIIQQAALDDQVKIKDIYSKLNITYEFAEFFDNMALQYKEADLVISRAGASTIEELTYIGLPAIFIPLPSAADNHQYYNAKLLEDKNAGWCLEQNNISAEKLADKILDLISNPKILEAASQNLLKRRKEGHKLLSNLIEEVI</sequence>
<dbReference type="EC" id="2.4.1.227" evidence="1"/>
<dbReference type="EMBL" id="CP000683">
    <property type="protein sequence ID" value="ABV84770.1"/>
    <property type="molecule type" value="Genomic_DNA"/>
</dbReference>
<dbReference type="RefSeq" id="WP_012152745.1">
    <property type="nucleotide sequence ID" value="NC_009900.1"/>
</dbReference>
<dbReference type="SMR" id="A8F1I4"/>
<dbReference type="CAZy" id="GT28">
    <property type="family name" value="Glycosyltransferase Family 28"/>
</dbReference>
<dbReference type="KEGG" id="rms:RMA_0579"/>
<dbReference type="HOGENOM" id="CLU_037404_2_1_5"/>
<dbReference type="UniPathway" id="UPA00219"/>
<dbReference type="Proteomes" id="UP000001311">
    <property type="component" value="Chromosome"/>
</dbReference>
<dbReference type="GO" id="GO:0005886">
    <property type="term" value="C:plasma membrane"/>
    <property type="evidence" value="ECO:0007669"/>
    <property type="project" value="UniProtKB-SubCell"/>
</dbReference>
<dbReference type="GO" id="GO:0051991">
    <property type="term" value="F:UDP-N-acetyl-D-glucosamine:N-acetylmuramoyl-L-alanyl-D-glutamyl-meso-2,6-diaminopimelyl-D-alanyl-D-alanine-diphosphoundecaprenol 4-beta-N-acetylglucosaminlytransferase activity"/>
    <property type="evidence" value="ECO:0007669"/>
    <property type="project" value="RHEA"/>
</dbReference>
<dbReference type="GO" id="GO:0050511">
    <property type="term" value="F:undecaprenyldiphospho-muramoylpentapeptide beta-N-acetylglucosaminyltransferase activity"/>
    <property type="evidence" value="ECO:0007669"/>
    <property type="project" value="UniProtKB-UniRule"/>
</dbReference>
<dbReference type="GO" id="GO:0005975">
    <property type="term" value="P:carbohydrate metabolic process"/>
    <property type="evidence" value="ECO:0007669"/>
    <property type="project" value="InterPro"/>
</dbReference>
<dbReference type="GO" id="GO:0051301">
    <property type="term" value="P:cell division"/>
    <property type="evidence" value="ECO:0007669"/>
    <property type="project" value="UniProtKB-KW"/>
</dbReference>
<dbReference type="GO" id="GO:0071555">
    <property type="term" value="P:cell wall organization"/>
    <property type="evidence" value="ECO:0007669"/>
    <property type="project" value="UniProtKB-KW"/>
</dbReference>
<dbReference type="GO" id="GO:0030259">
    <property type="term" value="P:lipid glycosylation"/>
    <property type="evidence" value="ECO:0007669"/>
    <property type="project" value="UniProtKB-UniRule"/>
</dbReference>
<dbReference type="GO" id="GO:0009252">
    <property type="term" value="P:peptidoglycan biosynthetic process"/>
    <property type="evidence" value="ECO:0007669"/>
    <property type="project" value="UniProtKB-UniRule"/>
</dbReference>
<dbReference type="GO" id="GO:0008360">
    <property type="term" value="P:regulation of cell shape"/>
    <property type="evidence" value="ECO:0007669"/>
    <property type="project" value="UniProtKB-KW"/>
</dbReference>
<dbReference type="CDD" id="cd03785">
    <property type="entry name" value="GT28_MurG"/>
    <property type="match status" value="1"/>
</dbReference>
<dbReference type="Gene3D" id="3.40.50.2000">
    <property type="entry name" value="Glycogen Phosphorylase B"/>
    <property type="match status" value="2"/>
</dbReference>
<dbReference type="HAMAP" id="MF_00033">
    <property type="entry name" value="MurG"/>
    <property type="match status" value="1"/>
</dbReference>
<dbReference type="InterPro" id="IPR006009">
    <property type="entry name" value="GlcNAc_MurG"/>
</dbReference>
<dbReference type="InterPro" id="IPR007235">
    <property type="entry name" value="Glyco_trans_28_C"/>
</dbReference>
<dbReference type="InterPro" id="IPR004276">
    <property type="entry name" value="GlycoTrans_28_N"/>
</dbReference>
<dbReference type="InterPro" id="IPR022439">
    <property type="entry name" value="RPE4"/>
</dbReference>
<dbReference type="NCBIfam" id="TIGR01133">
    <property type="entry name" value="murG"/>
    <property type="match status" value="1"/>
</dbReference>
<dbReference type="NCBIfam" id="TIGR03777">
    <property type="entry name" value="RPE4"/>
    <property type="match status" value="1"/>
</dbReference>
<dbReference type="PANTHER" id="PTHR21015:SF22">
    <property type="entry name" value="GLYCOSYLTRANSFERASE"/>
    <property type="match status" value="1"/>
</dbReference>
<dbReference type="PANTHER" id="PTHR21015">
    <property type="entry name" value="UDP-N-ACETYLGLUCOSAMINE--N-ACETYLMURAMYL-(PENTAPEPTIDE) PYROPHOSPHORYL-UNDECAPRENOL N-ACETYLGLUCOSAMINE TRANSFERASE 1"/>
    <property type="match status" value="1"/>
</dbReference>
<dbReference type="Pfam" id="PF04101">
    <property type="entry name" value="Glyco_tran_28_C"/>
    <property type="match status" value="1"/>
</dbReference>
<dbReference type="Pfam" id="PF03033">
    <property type="entry name" value="Glyco_transf_28"/>
    <property type="match status" value="1"/>
</dbReference>
<dbReference type="SUPFAM" id="SSF53756">
    <property type="entry name" value="UDP-Glycosyltransferase/glycogen phosphorylase"/>
    <property type="match status" value="1"/>
</dbReference>
<feature type="chain" id="PRO_1000057255" description="UDP-N-acetylglucosamine--N-acetylmuramyl-(pentapeptide) pyrophosphoryl-undecaprenol N-acetylglucosamine transferase">
    <location>
        <begin position="1"/>
        <end position="376"/>
    </location>
</feature>
<feature type="binding site" evidence="1">
    <location>
        <begin position="11"/>
        <end position="13"/>
    </location>
    <ligand>
        <name>UDP-N-acetyl-alpha-D-glucosamine</name>
        <dbReference type="ChEBI" id="CHEBI:57705"/>
    </ligand>
</feature>
<feature type="binding site" evidence="1">
    <location>
        <position position="117"/>
    </location>
    <ligand>
        <name>UDP-N-acetyl-alpha-D-glucosamine</name>
        <dbReference type="ChEBI" id="CHEBI:57705"/>
    </ligand>
</feature>
<feature type="binding site" evidence="1">
    <location>
        <position position="160"/>
    </location>
    <ligand>
        <name>UDP-N-acetyl-alpha-D-glucosamine</name>
        <dbReference type="ChEBI" id="CHEBI:57705"/>
    </ligand>
</feature>
<feature type="binding site" evidence="1">
    <location>
        <position position="208"/>
    </location>
    <ligand>
        <name>UDP-N-acetyl-alpha-D-glucosamine</name>
        <dbReference type="ChEBI" id="CHEBI:57705"/>
    </ligand>
</feature>
<feature type="binding site" evidence="1">
    <location>
        <position position="310"/>
    </location>
    <ligand>
        <name>UDP-N-acetyl-alpha-D-glucosamine</name>
        <dbReference type="ChEBI" id="CHEBI:57705"/>
    </ligand>
</feature>
<accession>A8F1I4</accession>
<evidence type="ECO:0000255" key="1">
    <source>
        <dbReference type="HAMAP-Rule" id="MF_00033"/>
    </source>
</evidence>
<keyword id="KW-0131">Cell cycle</keyword>
<keyword id="KW-0132">Cell division</keyword>
<keyword id="KW-0997">Cell inner membrane</keyword>
<keyword id="KW-1003">Cell membrane</keyword>
<keyword id="KW-0133">Cell shape</keyword>
<keyword id="KW-0961">Cell wall biogenesis/degradation</keyword>
<keyword id="KW-0328">Glycosyltransferase</keyword>
<keyword id="KW-0472">Membrane</keyword>
<keyword id="KW-0573">Peptidoglycan synthesis</keyword>
<keyword id="KW-0808">Transferase</keyword>
<organism>
    <name type="scientific">Rickettsia massiliae (strain Mtu5)</name>
    <dbReference type="NCBI Taxonomy" id="416276"/>
    <lineage>
        <taxon>Bacteria</taxon>
        <taxon>Pseudomonadati</taxon>
        <taxon>Pseudomonadota</taxon>
        <taxon>Alphaproteobacteria</taxon>
        <taxon>Rickettsiales</taxon>
        <taxon>Rickettsiaceae</taxon>
        <taxon>Rickettsieae</taxon>
        <taxon>Rickettsia</taxon>
        <taxon>spotted fever group</taxon>
    </lineage>
</organism>
<reference key="1">
    <citation type="journal article" date="2007" name="Genome Res.">
        <title>Lateral gene transfer between obligate intracellular bacteria: evidence from the Rickettsia massiliae genome.</title>
        <authorList>
            <person name="Blanc G."/>
            <person name="Ogata H."/>
            <person name="Robert C."/>
            <person name="Audic S."/>
            <person name="Claverie J.-M."/>
            <person name="Raoult D."/>
        </authorList>
    </citation>
    <scope>NUCLEOTIDE SEQUENCE [LARGE SCALE GENOMIC DNA]</scope>
    <source>
        <strain>Mtu5</strain>
    </source>
</reference>
<proteinExistence type="inferred from homology"/>
<comment type="function">
    <text evidence="1">Cell wall formation. Catalyzes the transfer of a GlcNAc subunit on undecaprenyl-pyrophosphoryl-MurNAc-pentapeptide (lipid intermediate I) to form undecaprenyl-pyrophosphoryl-MurNAc-(pentapeptide)GlcNAc (lipid intermediate II).</text>
</comment>
<comment type="catalytic activity">
    <reaction evidence="1">
        <text>di-trans,octa-cis-undecaprenyl diphospho-N-acetyl-alpha-D-muramoyl-L-alanyl-D-glutamyl-meso-2,6-diaminopimeloyl-D-alanyl-D-alanine + UDP-N-acetyl-alpha-D-glucosamine = di-trans,octa-cis-undecaprenyl diphospho-[N-acetyl-alpha-D-glucosaminyl-(1-&gt;4)]-N-acetyl-alpha-D-muramoyl-L-alanyl-D-glutamyl-meso-2,6-diaminopimeloyl-D-alanyl-D-alanine + UDP + H(+)</text>
        <dbReference type="Rhea" id="RHEA:31227"/>
        <dbReference type="ChEBI" id="CHEBI:15378"/>
        <dbReference type="ChEBI" id="CHEBI:57705"/>
        <dbReference type="ChEBI" id="CHEBI:58223"/>
        <dbReference type="ChEBI" id="CHEBI:61387"/>
        <dbReference type="ChEBI" id="CHEBI:61388"/>
        <dbReference type="EC" id="2.4.1.227"/>
    </reaction>
</comment>
<comment type="pathway">
    <text evidence="1">Cell wall biogenesis; peptidoglycan biosynthesis.</text>
</comment>
<comment type="subcellular location">
    <subcellularLocation>
        <location evidence="1">Cell inner membrane</location>
        <topology evidence="1">Peripheral membrane protein</topology>
        <orientation evidence="1">Cytoplasmic side</orientation>
    </subcellularLocation>
</comment>
<comment type="similarity">
    <text evidence="1">Belongs to the glycosyltransferase 28 family. MurG subfamily.</text>
</comment>
<protein>
    <recommendedName>
        <fullName evidence="1">UDP-N-acetylglucosamine--N-acetylmuramyl-(pentapeptide) pyrophosphoryl-undecaprenol N-acetylglucosamine transferase</fullName>
        <ecNumber evidence="1">2.4.1.227</ecNumber>
    </recommendedName>
    <alternativeName>
        <fullName evidence="1">Undecaprenyl-PP-MurNAc-pentapeptide-UDPGlcNAc GlcNAc transferase</fullName>
    </alternativeName>
</protein>
<gene>
    <name evidence="1" type="primary">murG</name>
    <name type="ordered locus">RMA_0579</name>
</gene>
<name>MURG_RICM5</name>